<reference key="1">
    <citation type="journal article" date="2001" name="Nature">
        <title>Massive gene decay in the leprosy bacillus.</title>
        <authorList>
            <person name="Cole S.T."/>
            <person name="Eiglmeier K."/>
            <person name="Parkhill J."/>
            <person name="James K.D."/>
            <person name="Thomson N.R."/>
            <person name="Wheeler P.R."/>
            <person name="Honore N."/>
            <person name="Garnier T."/>
            <person name="Churcher C.M."/>
            <person name="Harris D.E."/>
            <person name="Mungall K.L."/>
            <person name="Basham D."/>
            <person name="Brown D."/>
            <person name="Chillingworth T."/>
            <person name="Connor R."/>
            <person name="Davies R.M."/>
            <person name="Devlin K."/>
            <person name="Duthoy S."/>
            <person name="Feltwell T."/>
            <person name="Fraser A."/>
            <person name="Hamlin N."/>
            <person name="Holroyd S."/>
            <person name="Hornsby T."/>
            <person name="Jagels K."/>
            <person name="Lacroix C."/>
            <person name="Maclean J."/>
            <person name="Moule S."/>
            <person name="Murphy L.D."/>
            <person name="Oliver K."/>
            <person name="Quail M.A."/>
            <person name="Rajandream M.A."/>
            <person name="Rutherford K.M."/>
            <person name="Rutter S."/>
            <person name="Seeger K."/>
            <person name="Simon S."/>
            <person name="Simmonds M."/>
            <person name="Skelton J."/>
            <person name="Squares R."/>
            <person name="Squares S."/>
            <person name="Stevens K."/>
            <person name="Taylor K."/>
            <person name="Whitehead S."/>
            <person name="Woodward J.R."/>
            <person name="Barrell B.G."/>
        </authorList>
    </citation>
    <scope>NUCLEOTIDE SEQUENCE [LARGE SCALE GENOMIC DNA]</scope>
    <source>
        <strain>TN</strain>
    </source>
</reference>
<comment type="function">
    <text evidence="1">One of the essential components for the initiation of protein synthesis. Protects formylmethionyl-tRNA from spontaneous hydrolysis and promotes its binding to the 30S ribosomal subunits. Also involved in the hydrolysis of GTP during the formation of the 70S ribosomal complex (By similarity).</text>
</comment>
<comment type="subcellular location">
    <subcellularLocation>
        <location evidence="1">Cytoplasm</location>
    </subcellularLocation>
</comment>
<comment type="similarity">
    <text evidence="3">Belongs to the TRAFAC class translation factor GTPase superfamily. Classic translation factor GTPase family. IF-2 subfamily.</text>
</comment>
<feature type="chain" id="PRO_0000137223" description="Translation initiation factor IF-2">
    <location>
        <begin position="1"/>
        <end position="924"/>
    </location>
</feature>
<feature type="domain" description="tr-type G">
    <location>
        <begin position="420"/>
        <end position="591"/>
    </location>
</feature>
<feature type="region of interest" description="Disordered" evidence="2">
    <location>
        <begin position="118"/>
        <end position="325"/>
    </location>
</feature>
<feature type="region of interest" description="G1" evidence="1">
    <location>
        <begin position="429"/>
        <end position="436"/>
    </location>
</feature>
<feature type="region of interest" description="G2" evidence="1">
    <location>
        <begin position="454"/>
        <end position="458"/>
    </location>
</feature>
<feature type="region of interest" description="G3" evidence="1">
    <location>
        <begin position="479"/>
        <end position="482"/>
    </location>
</feature>
<feature type="region of interest" description="G4" evidence="1">
    <location>
        <begin position="533"/>
        <end position="536"/>
    </location>
</feature>
<feature type="region of interest" description="G5" evidence="1">
    <location>
        <begin position="569"/>
        <end position="571"/>
    </location>
</feature>
<feature type="compositionally biased region" description="Pro residues" evidence="2">
    <location>
        <begin position="150"/>
        <end position="173"/>
    </location>
</feature>
<feature type="compositionally biased region" description="Pro residues" evidence="2">
    <location>
        <begin position="192"/>
        <end position="201"/>
    </location>
</feature>
<feature type="compositionally biased region" description="Low complexity" evidence="2">
    <location>
        <begin position="202"/>
        <end position="212"/>
    </location>
</feature>
<feature type="compositionally biased region" description="Gly residues" evidence="2">
    <location>
        <begin position="229"/>
        <end position="295"/>
    </location>
</feature>
<feature type="compositionally biased region" description="Basic residues" evidence="2">
    <location>
        <begin position="299"/>
        <end position="308"/>
    </location>
</feature>
<feature type="binding site" evidence="1">
    <location>
        <begin position="429"/>
        <end position="436"/>
    </location>
    <ligand>
        <name>GTP</name>
        <dbReference type="ChEBI" id="CHEBI:37565"/>
    </ligand>
</feature>
<feature type="binding site" evidence="1">
    <location>
        <begin position="479"/>
        <end position="483"/>
    </location>
    <ligand>
        <name>GTP</name>
        <dbReference type="ChEBI" id="CHEBI:37565"/>
    </ligand>
</feature>
<feature type="binding site" evidence="1">
    <location>
        <begin position="533"/>
        <end position="536"/>
    </location>
    <ligand>
        <name>GTP</name>
        <dbReference type="ChEBI" id="CHEBI:37565"/>
    </ligand>
</feature>
<gene>
    <name type="primary">infB</name>
    <name type="ordered locus">ML1556</name>
    <name type="ORF">MLCB596.14</name>
</gene>
<keyword id="KW-0963">Cytoplasm</keyword>
<keyword id="KW-0342">GTP-binding</keyword>
<keyword id="KW-0396">Initiation factor</keyword>
<keyword id="KW-0547">Nucleotide-binding</keyword>
<keyword id="KW-0648">Protein biosynthesis</keyword>
<keyword id="KW-1185">Reference proteome</keyword>
<evidence type="ECO:0000250" key="1"/>
<evidence type="ECO:0000256" key="2">
    <source>
        <dbReference type="SAM" id="MobiDB-lite"/>
    </source>
</evidence>
<evidence type="ECO:0000305" key="3"/>
<organism>
    <name type="scientific">Mycobacterium leprae (strain TN)</name>
    <dbReference type="NCBI Taxonomy" id="272631"/>
    <lineage>
        <taxon>Bacteria</taxon>
        <taxon>Bacillati</taxon>
        <taxon>Actinomycetota</taxon>
        <taxon>Actinomycetes</taxon>
        <taxon>Mycobacteriales</taxon>
        <taxon>Mycobacteriaceae</taxon>
        <taxon>Mycobacterium</taxon>
    </lineage>
</organism>
<name>IF2_MYCLE</name>
<proteinExistence type="inferred from homology"/>
<sequence>MAGKARVHELAKELGVTSKEVLARLNEQGEFVKSASSTVEAPVARRLRESFGGIKPAADKGAEQVATKAQAKRLGESLDQTLDRALDKAVAGNGATTAAPVQVDHSAAVVPIVAGEGPSTAHREELAPPAGQPSEQPGVPLPGQQGTPAAPHPGHPGMPTGPHPGPAPKPGGRPPRVGNNPFSSAQSVARPIPRPPAPRPSASPSSMSPRPGGAVGGGGPRPPRTGVPRPGGGRPGAPVGGRSDAGGGNYRGGGVGALPGGGSGGFRGRPGGGGHGGGGRPGQRGGAAGAFGRPGGAPRRGRKSKRQKRQEYDSMQAPVVGGVRLPHGNGETIRLARGASLSDFAEKIDANPAALVQALFNLGEMVTATQSVGDETLELLGSEMNYNVQVVSPEDEDRELLEPFDLTYGEDQGDEDELQVRPPVVTVMGHVDHGKTRLLDTIRKANVREAEAGGITQHIGAYQVGVDLDGSERLITFIDTPGHEAFTAMRARGAKATDIAILVVAADDGVMPQTVEAINHAQAADVPIVVAVNKIDKEGADPAKIRGQLTEYGLVAEDFGGDTMFIDISAKVGTNIEALLEAVLLTADAALDLRANSGMEAQGVAIEAHLDRGRGPVATVLVQRGTLRIGDSVVAGDAYGRVRRMVDEHGVDIEAALPSSPVQVIGFTSVPGAGDNFLVVDEDRIARQIADRRSARKRNALAARSRKRISLEDLDSALKETSQLNLILKGDNAGTVEALEEALMGIQVDDEVALRVIDRGVGGITETNVNLASASDAIIIGFNVRAEGKATELASREGVEIRYYLVIYQAIDDIEKALRGMLKPIYEENQLGRAEIRALFRSSKVGIIAGCIISSGVVRRNAKVRLLRDNIVVTDNLTVTSLRREKDDVTEVREGFECGMTLGYSDIKEGDVIESYELVEKQRA</sequence>
<dbReference type="EMBL" id="AL035472">
    <property type="protein sequence ID" value="CAB36570.1"/>
    <property type="molecule type" value="Genomic_DNA"/>
</dbReference>
<dbReference type="EMBL" id="AL583922">
    <property type="protein sequence ID" value="CAC30507.1"/>
    <property type="molecule type" value="Genomic_DNA"/>
</dbReference>
<dbReference type="PIR" id="F87103">
    <property type="entry name" value="F87103"/>
</dbReference>
<dbReference type="RefSeq" id="NP_302081.1">
    <property type="nucleotide sequence ID" value="NC_002677.1"/>
</dbReference>
<dbReference type="RefSeq" id="WP_010908402.1">
    <property type="nucleotide sequence ID" value="NC_002677.1"/>
</dbReference>
<dbReference type="SMR" id="Q9Z5I9"/>
<dbReference type="STRING" id="272631.gene:17575397"/>
<dbReference type="KEGG" id="mle:ML1556"/>
<dbReference type="PATRIC" id="fig|272631.5.peg.2936"/>
<dbReference type="Leproma" id="ML1556"/>
<dbReference type="eggNOG" id="COG0532">
    <property type="taxonomic scope" value="Bacteria"/>
</dbReference>
<dbReference type="eggNOG" id="COG3266">
    <property type="taxonomic scope" value="Bacteria"/>
</dbReference>
<dbReference type="HOGENOM" id="CLU_006301_9_3_11"/>
<dbReference type="OrthoDB" id="9811804at2"/>
<dbReference type="Proteomes" id="UP000000806">
    <property type="component" value="Chromosome"/>
</dbReference>
<dbReference type="GO" id="GO:0005829">
    <property type="term" value="C:cytosol"/>
    <property type="evidence" value="ECO:0007669"/>
    <property type="project" value="TreeGrafter"/>
</dbReference>
<dbReference type="GO" id="GO:0005525">
    <property type="term" value="F:GTP binding"/>
    <property type="evidence" value="ECO:0007669"/>
    <property type="project" value="UniProtKB-KW"/>
</dbReference>
<dbReference type="GO" id="GO:0003924">
    <property type="term" value="F:GTPase activity"/>
    <property type="evidence" value="ECO:0007669"/>
    <property type="project" value="UniProtKB-UniRule"/>
</dbReference>
<dbReference type="GO" id="GO:0003743">
    <property type="term" value="F:translation initiation factor activity"/>
    <property type="evidence" value="ECO:0007669"/>
    <property type="project" value="UniProtKB-UniRule"/>
</dbReference>
<dbReference type="CDD" id="cd01887">
    <property type="entry name" value="IF2_eIF5B"/>
    <property type="match status" value="1"/>
</dbReference>
<dbReference type="CDD" id="cd03702">
    <property type="entry name" value="IF2_mtIF2_II"/>
    <property type="match status" value="1"/>
</dbReference>
<dbReference type="CDD" id="cd03692">
    <property type="entry name" value="mtIF2_IVc"/>
    <property type="match status" value="1"/>
</dbReference>
<dbReference type="FunFam" id="1.10.10.2480:FF:000003">
    <property type="entry name" value="Translation initiation factor IF-2"/>
    <property type="match status" value="1"/>
</dbReference>
<dbReference type="FunFam" id="2.40.30.10:FF:000007">
    <property type="entry name" value="Translation initiation factor IF-2"/>
    <property type="match status" value="1"/>
</dbReference>
<dbReference type="FunFam" id="2.40.30.10:FF:000008">
    <property type="entry name" value="Translation initiation factor IF-2"/>
    <property type="match status" value="1"/>
</dbReference>
<dbReference type="FunFam" id="3.40.50.10050:FF:000001">
    <property type="entry name" value="Translation initiation factor IF-2"/>
    <property type="match status" value="1"/>
</dbReference>
<dbReference type="FunFam" id="3.40.50.300:FF:000019">
    <property type="entry name" value="Translation initiation factor IF-2"/>
    <property type="match status" value="1"/>
</dbReference>
<dbReference type="Gene3D" id="1.10.10.2480">
    <property type="match status" value="1"/>
</dbReference>
<dbReference type="Gene3D" id="3.40.50.300">
    <property type="entry name" value="P-loop containing nucleotide triphosphate hydrolases"/>
    <property type="match status" value="1"/>
</dbReference>
<dbReference type="Gene3D" id="2.40.30.10">
    <property type="entry name" value="Translation factors"/>
    <property type="match status" value="2"/>
</dbReference>
<dbReference type="Gene3D" id="3.40.50.10050">
    <property type="entry name" value="Translation initiation factor IF- 2, domain 3"/>
    <property type="match status" value="1"/>
</dbReference>
<dbReference type="HAMAP" id="MF_00100_B">
    <property type="entry name" value="IF_2_B"/>
    <property type="match status" value="1"/>
</dbReference>
<dbReference type="InterPro" id="IPR053905">
    <property type="entry name" value="EF-G-like_DII"/>
</dbReference>
<dbReference type="InterPro" id="IPR004161">
    <property type="entry name" value="EFTu-like_2"/>
</dbReference>
<dbReference type="InterPro" id="IPR044145">
    <property type="entry name" value="IF2_II"/>
</dbReference>
<dbReference type="InterPro" id="IPR006847">
    <property type="entry name" value="IF2_N"/>
</dbReference>
<dbReference type="InterPro" id="IPR027417">
    <property type="entry name" value="P-loop_NTPase"/>
</dbReference>
<dbReference type="InterPro" id="IPR005225">
    <property type="entry name" value="Small_GTP-bd"/>
</dbReference>
<dbReference type="InterPro" id="IPR000795">
    <property type="entry name" value="T_Tr_GTP-bd_dom"/>
</dbReference>
<dbReference type="InterPro" id="IPR000178">
    <property type="entry name" value="TF_IF2_bacterial-like"/>
</dbReference>
<dbReference type="InterPro" id="IPR015760">
    <property type="entry name" value="TIF_IF2"/>
</dbReference>
<dbReference type="InterPro" id="IPR023115">
    <property type="entry name" value="TIF_IF2_dom3"/>
</dbReference>
<dbReference type="InterPro" id="IPR036925">
    <property type="entry name" value="TIF_IF2_dom3_sf"/>
</dbReference>
<dbReference type="InterPro" id="IPR009000">
    <property type="entry name" value="Transl_B-barrel_sf"/>
</dbReference>
<dbReference type="NCBIfam" id="TIGR00487">
    <property type="entry name" value="IF-2"/>
    <property type="match status" value="1"/>
</dbReference>
<dbReference type="NCBIfam" id="TIGR00231">
    <property type="entry name" value="small_GTP"/>
    <property type="match status" value="1"/>
</dbReference>
<dbReference type="PANTHER" id="PTHR43381:SF5">
    <property type="entry name" value="TR-TYPE G DOMAIN-CONTAINING PROTEIN"/>
    <property type="match status" value="1"/>
</dbReference>
<dbReference type="PANTHER" id="PTHR43381">
    <property type="entry name" value="TRANSLATION INITIATION FACTOR IF-2-RELATED"/>
    <property type="match status" value="1"/>
</dbReference>
<dbReference type="Pfam" id="PF22042">
    <property type="entry name" value="EF-G_D2"/>
    <property type="match status" value="1"/>
</dbReference>
<dbReference type="Pfam" id="PF00009">
    <property type="entry name" value="GTP_EFTU"/>
    <property type="match status" value="1"/>
</dbReference>
<dbReference type="Pfam" id="PF03144">
    <property type="entry name" value="GTP_EFTU_D2"/>
    <property type="match status" value="1"/>
</dbReference>
<dbReference type="Pfam" id="PF11987">
    <property type="entry name" value="IF-2"/>
    <property type="match status" value="1"/>
</dbReference>
<dbReference type="Pfam" id="PF04760">
    <property type="entry name" value="IF2_N"/>
    <property type="match status" value="2"/>
</dbReference>
<dbReference type="PRINTS" id="PR00315">
    <property type="entry name" value="ELONGATNFCT"/>
</dbReference>
<dbReference type="SUPFAM" id="SSF52156">
    <property type="entry name" value="Initiation factor IF2/eIF5b, domain 3"/>
    <property type="match status" value="1"/>
</dbReference>
<dbReference type="SUPFAM" id="SSF52540">
    <property type="entry name" value="P-loop containing nucleoside triphosphate hydrolases"/>
    <property type="match status" value="1"/>
</dbReference>
<dbReference type="SUPFAM" id="SSF50447">
    <property type="entry name" value="Translation proteins"/>
    <property type="match status" value="2"/>
</dbReference>
<dbReference type="PROSITE" id="PS51722">
    <property type="entry name" value="G_TR_2"/>
    <property type="match status" value="1"/>
</dbReference>
<dbReference type="PROSITE" id="PS01176">
    <property type="entry name" value="IF2"/>
    <property type="match status" value="1"/>
</dbReference>
<protein>
    <recommendedName>
        <fullName>Translation initiation factor IF-2</fullName>
    </recommendedName>
</protein>
<accession>Q9Z5I9</accession>